<name>RS3_BRUC2</name>
<accession>A9M5P4</accession>
<comment type="function">
    <text evidence="1">Binds the lower part of the 30S subunit head. Binds mRNA in the 70S ribosome, positioning it for translation.</text>
</comment>
<comment type="subunit">
    <text evidence="1">Part of the 30S ribosomal subunit. Forms a tight complex with proteins S10 and S14.</text>
</comment>
<comment type="similarity">
    <text evidence="1">Belongs to the universal ribosomal protein uS3 family.</text>
</comment>
<protein>
    <recommendedName>
        <fullName evidence="1">Small ribosomal subunit protein uS3</fullName>
    </recommendedName>
    <alternativeName>
        <fullName evidence="3">30S ribosomal protein S3</fullName>
    </alternativeName>
</protein>
<proteinExistence type="inferred from homology"/>
<reference key="1">
    <citation type="submission" date="2007-10" db="EMBL/GenBank/DDBJ databases">
        <title>Brucella canis ATCC 23365 whole genome shotgun sequencing project.</title>
        <authorList>
            <person name="Setubal J.C."/>
            <person name="Bowns C."/>
            <person name="Boyle S."/>
            <person name="Crasta O.R."/>
            <person name="Czar M.J."/>
            <person name="Dharmanolla C."/>
            <person name="Gillespie J.J."/>
            <person name="Kenyon R.W."/>
            <person name="Lu J."/>
            <person name="Mane S."/>
            <person name="Mohapatra S."/>
            <person name="Nagrani S."/>
            <person name="Purkayastha A."/>
            <person name="Rajasimha H.K."/>
            <person name="Shallom J.M."/>
            <person name="Shallom S."/>
            <person name="Shukla M."/>
            <person name="Snyder E.E."/>
            <person name="Sobral B.W."/>
            <person name="Wattam A.R."/>
            <person name="Will R."/>
            <person name="Williams K."/>
            <person name="Yoo H."/>
            <person name="Bruce D."/>
            <person name="Detter C."/>
            <person name="Munk C."/>
            <person name="Brettin T.S."/>
        </authorList>
    </citation>
    <scope>NUCLEOTIDE SEQUENCE [LARGE SCALE GENOMIC DNA]</scope>
    <source>
        <strain>ATCC 23365 / NCTC 10854 / RM-666</strain>
    </source>
</reference>
<dbReference type="EMBL" id="CP000872">
    <property type="protein sequence ID" value="ABX62299.1"/>
    <property type="molecule type" value="Genomic_DNA"/>
</dbReference>
<dbReference type="RefSeq" id="WP_004690915.1">
    <property type="nucleotide sequence ID" value="NC_010103.1"/>
</dbReference>
<dbReference type="SMR" id="A9M5P4"/>
<dbReference type="GeneID" id="55590902"/>
<dbReference type="KEGG" id="bcs:BCAN_A1250"/>
<dbReference type="HOGENOM" id="CLU_058591_0_2_5"/>
<dbReference type="PhylomeDB" id="A9M5P4"/>
<dbReference type="Proteomes" id="UP000001385">
    <property type="component" value="Chromosome I"/>
</dbReference>
<dbReference type="GO" id="GO:0022627">
    <property type="term" value="C:cytosolic small ribosomal subunit"/>
    <property type="evidence" value="ECO:0007669"/>
    <property type="project" value="TreeGrafter"/>
</dbReference>
<dbReference type="GO" id="GO:0003729">
    <property type="term" value="F:mRNA binding"/>
    <property type="evidence" value="ECO:0007669"/>
    <property type="project" value="UniProtKB-UniRule"/>
</dbReference>
<dbReference type="GO" id="GO:0019843">
    <property type="term" value="F:rRNA binding"/>
    <property type="evidence" value="ECO:0007669"/>
    <property type="project" value="UniProtKB-UniRule"/>
</dbReference>
<dbReference type="GO" id="GO:0003735">
    <property type="term" value="F:structural constituent of ribosome"/>
    <property type="evidence" value="ECO:0007669"/>
    <property type="project" value="InterPro"/>
</dbReference>
<dbReference type="GO" id="GO:0006412">
    <property type="term" value="P:translation"/>
    <property type="evidence" value="ECO:0007669"/>
    <property type="project" value="UniProtKB-UniRule"/>
</dbReference>
<dbReference type="CDD" id="cd02412">
    <property type="entry name" value="KH-II_30S_S3"/>
    <property type="match status" value="1"/>
</dbReference>
<dbReference type="FunFam" id="3.30.1140.32:FF:000002">
    <property type="entry name" value="30S ribosomal protein S3"/>
    <property type="match status" value="1"/>
</dbReference>
<dbReference type="FunFam" id="3.30.300.20:FF:000001">
    <property type="entry name" value="30S ribosomal protein S3"/>
    <property type="match status" value="1"/>
</dbReference>
<dbReference type="Gene3D" id="3.30.300.20">
    <property type="match status" value="1"/>
</dbReference>
<dbReference type="Gene3D" id="3.30.1140.32">
    <property type="entry name" value="Ribosomal protein S3, C-terminal domain"/>
    <property type="match status" value="1"/>
</dbReference>
<dbReference type="HAMAP" id="MF_01309_B">
    <property type="entry name" value="Ribosomal_uS3_B"/>
    <property type="match status" value="1"/>
</dbReference>
<dbReference type="InterPro" id="IPR004087">
    <property type="entry name" value="KH_dom"/>
</dbReference>
<dbReference type="InterPro" id="IPR015946">
    <property type="entry name" value="KH_dom-like_a/b"/>
</dbReference>
<dbReference type="InterPro" id="IPR004044">
    <property type="entry name" value="KH_dom_type_2"/>
</dbReference>
<dbReference type="InterPro" id="IPR009019">
    <property type="entry name" value="KH_sf_prok-type"/>
</dbReference>
<dbReference type="InterPro" id="IPR036419">
    <property type="entry name" value="Ribosomal_S3_C_sf"/>
</dbReference>
<dbReference type="InterPro" id="IPR005704">
    <property type="entry name" value="Ribosomal_uS3_bac-typ"/>
</dbReference>
<dbReference type="InterPro" id="IPR001351">
    <property type="entry name" value="Ribosomal_uS3_C"/>
</dbReference>
<dbReference type="InterPro" id="IPR018280">
    <property type="entry name" value="Ribosomal_uS3_CS"/>
</dbReference>
<dbReference type="NCBIfam" id="TIGR01009">
    <property type="entry name" value="rpsC_bact"/>
    <property type="match status" value="1"/>
</dbReference>
<dbReference type="PANTHER" id="PTHR11760">
    <property type="entry name" value="30S/40S RIBOSOMAL PROTEIN S3"/>
    <property type="match status" value="1"/>
</dbReference>
<dbReference type="PANTHER" id="PTHR11760:SF19">
    <property type="entry name" value="SMALL RIBOSOMAL SUBUNIT PROTEIN US3C"/>
    <property type="match status" value="1"/>
</dbReference>
<dbReference type="Pfam" id="PF07650">
    <property type="entry name" value="KH_2"/>
    <property type="match status" value="1"/>
</dbReference>
<dbReference type="Pfam" id="PF00189">
    <property type="entry name" value="Ribosomal_S3_C"/>
    <property type="match status" value="1"/>
</dbReference>
<dbReference type="SMART" id="SM00322">
    <property type="entry name" value="KH"/>
    <property type="match status" value="1"/>
</dbReference>
<dbReference type="SUPFAM" id="SSF54814">
    <property type="entry name" value="Prokaryotic type KH domain (KH-domain type II)"/>
    <property type="match status" value="1"/>
</dbReference>
<dbReference type="SUPFAM" id="SSF54821">
    <property type="entry name" value="Ribosomal protein S3 C-terminal domain"/>
    <property type="match status" value="1"/>
</dbReference>
<dbReference type="PROSITE" id="PS50823">
    <property type="entry name" value="KH_TYPE_2"/>
    <property type="match status" value="1"/>
</dbReference>
<dbReference type="PROSITE" id="PS00548">
    <property type="entry name" value="RIBOSOMAL_S3"/>
    <property type="match status" value="1"/>
</dbReference>
<organism>
    <name type="scientific">Brucella canis (strain ATCC 23365 / NCTC 10854 / RM-666)</name>
    <dbReference type="NCBI Taxonomy" id="483179"/>
    <lineage>
        <taxon>Bacteria</taxon>
        <taxon>Pseudomonadati</taxon>
        <taxon>Pseudomonadota</taxon>
        <taxon>Alphaproteobacteria</taxon>
        <taxon>Hyphomicrobiales</taxon>
        <taxon>Brucellaceae</taxon>
        <taxon>Brucella/Ochrobactrum group</taxon>
        <taxon>Brucella</taxon>
    </lineage>
</organism>
<feature type="chain" id="PRO_1000086093" description="Small ribosomal subunit protein uS3">
    <location>
        <begin position="1"/>
        <end position="236"/>
    </location>
</feature>
<feature type="domain" description="KH type-2" evidence="1">
    <location>
        <begin position="39"/>
        <end position="107"/>
    </location>
</feature>
<feature type="region of interest" description="Disordered" evidence="2">
    <location>
        <begin position="214"/>
        <end position="236"/>
    </location>
</feature>
<keyword id="KW-1185">Reference proteome</keyword>
<keyword id="KW-0687">Ribonucleoprotein</keyword>
<keyword id="KW-0689">Ribosomal protein</keyword>
<keyword id="KW-0694">RNA-binding</keyword>
<keyword id="KW-0699">rRNA-binding</keyword>
<gene>
    <name evidence="1" type="primary">rpsC</name>
    <name type="ordered locus">BCAN_A1250</name>
</gene>
<evidence type="ECO:0000255" key="1">
    <source>
        <dbReference type="HAMAP-Rule" id="MF_01309"/>
    </source>
</evidence>
<evidence type="ECO:0000256" key="2">
    <source>
        <dbReference type="SAM" id="MobiDB-lite"/>
    </source>
</evidence>
<evidence type="ECO:0000305" key="3"/>
<sequence>MGQKINPIGLRLGINRTWDSRWYANTGEYGKLLHEDVKIREFLTEELKQAAISKIVIERPHKKCRVTIHSARPGIIIGKKGADIEKLRKKLSEMTNADTSLNIVEVRKPEVDATLIAQLIAQQLERRVAFRRAMKRAVQSAMRLGAEGIRINCSGRLGGAEIARMEWYREGRVPLHTLRADIDYGTAEAKTAYGICGVKVWVFKGEILEHDPMASERRAVEGDNQGSSSNRRRENA</sequence>